<gene>
    <name type="primary">CTSK</name>
</gene>
<reference key="1">
    <citation type="journal article" date="1999" name="Bone">
        <title>Cloning and expression of rhesus monkey cathepsin K.</title>
        <authorList>
            <person name="Guay J."/>
            <person name="Riendeau D."/>
            <person name="Mancini J.A."/>
        </authorList>
    </citation>
    <scope>NUCLEOTIDE SEQUENCE [MRNA]</scope>
</reference>
<reference key="2">
    <citation type="journal article" date="2006" name="J. Med. Chem.">
        <title>Structure activity relationships of 5-, 6-, and 7-methyl-substituted azepan-3-one cathepsin K inhibitors.</title>
        <authorList>
            <person name="Yamashita D.S."/>
            <person name="Marquis R.W."/>
            <person name="Xie R."/>
            <person name="Nidamarthy S.D."/>
            <person name="Oh H.J."/>
            <person name="Jeong J.U."/>
            <person name="Erhard K.F."/>
            <person name="Ward K.W."/>
            <person name="Roethke T.J."/>
            <person name="Smith B.R."/>
            <person name="Cheng H.Y."/>
            <person name="Geng X."/>
            <person name="Lin F."/>
            <person name="Offen P.H."/>
            <person name="Wang B."/>
            <person name="Nevins N."/>
            <person name="Head M.S."/>
            <person name="Haltiwanger R.C."/>
            <person name="Narducci Sarjeant A.A."/>
            <person name="Liable-Sands L.M."/>
            <person name="Zhao B."/>
            <person name="Smith W.W."/>
            <person name="Janson C.A."/>
            <person name="Gao E."/>
            <person name="Tomaszek T."/>
            <person name="McQueney M."/>
            <person name="James I.E."/>
            <person name="Gress C.J."/>
            <person name="Zembryki D.L."/>
            <person name="Lark M.W."/>
            <person name="Veber D.F."/>
        </authorList>
    </citation>
    <scope>X-RAY CRYSTALLOGRAPHY (2.55 ANGSTROMS) OF 115-329 IN COMPLEX WITH INHIBITORS</scope>
    <scope>DISULFIDE BONDS</scope>
</reference>
<sequence>MWGLKVLLLPVMSFALYPEEILDTHWELWKKTHRKQYNSKVDEISRRLIWEKNLKYISIHNLEASLGVHTYELAMNHLGDMTNEEVVQKMTGLKVPASHSRSNDTLYIPDWEGRAPDSVDYRKKGYVTPVKNQGQCGSCWAFSSVGALEGQLKKKTGKLLNLSPQNLVDCVSENDGCGGGYMTNAFQYVQKNRGIDSEDAYPYVGQEESCMYNPTGKAAKCRGYREIPEGNEKALKRAVARVGPVSVAIDASLTSFQFYSKGVYYDESCNSDNLNHAVLAVGYGIQKGNKHWIIKNSWGENWGNKGYILMARNKNNACGIANLASFPKM</sequence>
<accession>P61277</accession>
<accession>O77641</accession>
<comment type="function">
    <text evidence="2">Thiol protease involved in osteoclastic bone resorption and may participate partially in the disorder of bone remodeling. Displays potent endoprotease activity against fibrinogen at acid pH. May play an important role in extracellular matrix degradation. Involved in the release of thyroid hormone thyroxine (T4) by limited proteolysis of TG/thyroglobulin in the thyroid follicle lumen.</text>
</comment>
<comment type="catalytic activity">
    <reaction>
        <text>Broad proteolytic activity. With small-molecule substrates and inhibitors, the major determinant of specificity is P2, which is preferably Leu, Met &gt; Phe, and not Arg.</text>
        <dbReference type="EC" id="3.4.22.38"/>
    </reaction>
</comment>
<comment type="subcellular location">
    <subcellularLocation>
        <location evidence="2">Lysosome</location>
    </subcellularLocation>
    <subcellularLocation>
        <location evidence="2">Secreted</location>
    </subcellularLocation>
    <subcellularLocation>
        <location evidence="2">Apical cell membrane</location>
        <topology evidence="2">Peripheral membrane protein</topology>
        <orientation evidence="2">Extracellular side</orientation>
    </subcellularLocation>
    <text evidence="2">Localizes to the lumen of thyroid follicles and to the apical membrane of thyroid epithelial cells.</text>
</comment>
<comment type="similarity">
    <text evidence="4 5 6">Belongs to the peptidase C1 family.</text>
</comment>
<protein>
    <recommendedName>
        <fullName>Cathepsin K</fullName>
        <ecNumber>3.4.22.38</ecNumber>
    </recommendedName>
</protein>
<feature type="signal peptide" evidence="3">
    <location>
        <begin position="1"/>
        <end position="15"/>
    </location>
</feature>
<feature type="propeptide" id="PRO_0000026299" description="Activation peptide">
    <location>
        <begin position="16"/>
        <end position="114"/>
    </location>
</feature>
<feature type="chain" id="PRO_0000026300" description="Cathepsin K">
    <location>
        <begin position="115"/>
        <end position="329"/>
    </location>
</feature>
<feature type="active site" evidence="1">
    <location>
        <position position="139"/>
    </location>
</feature>
<feature type="active site" evidence="1">
    <location>
        <position position="276"/>
    </location>
</feature>
<feature type="active site" evidence="1">
    <location>
        <position position="296"/>
    </location>
</feature>
<feature type="glycosylation site" description="N-linked (GlcNAc...) asparagine" evidence="3">
    <location>
        <position position="103"/>
    </location>
</feature>
<feature type="disulfide bond" evidence="7">
    <location>
        <begin position="136"/>
        <end position="177"/>
    </location>
</feature>
<feature type="disulfide bond" evidence="7">
    <location>
        <begin position="170"/>
        <end position="210"/>
    </location>
</feature>
<feature type="disulfide bond" evidence="7">
    <location>
        <begin position="269"/>
        <end position="318"/>
    </location>
</feature>
<feature type="helix" evidence="8">
    <location>
        <begin position="121"/>
        <end position="124"/>
    </location>
</feature>
<feature type="strand" evidence="8">
    <location>
        <begin position="135"/>
        <end position="137"/>
    </location>
</feature>
<feature type="helix" evidence="8">
    <location>
        <begin position="139"/>
        <end position="156"/>
    </location>
</feature>
<feature type="helix" evidence="8">
    <location>
        <begin position="164"/>
        <end position="170"/>
    </location>
</feature>
<feature type="helix" evidence="8">
    <location>
        <begin position="176"/>
        <end position="178"/>
    </location>
</feature>
<feature type="helix" evidence="8">
    <location>
        <begin position="182"/>
        <end position="192"/>
    </location>
</feature>
<feature type="strand" evidence="8">
    <location>
        <begin position="195"/>
        <end position="197"/>
    </location>
</feature>
<feature type="turn" evidence="8">
    <location>
        <begin position="198"/>
        <end position="200"/>
    </location>
</feature>
<feature type="helix" evidence="8">
    <location>
        <begin position="214"/>
        <end position="216"/>
    </location>
</feature>
<feature type="strand" evidence="8">
    <location>
        <begin position="217"/>
        <end position="219"/>
    </location>
</feature>
<feature type="strand" evidence="8">
    <location>
        <begin position="222"/>
        <end position="226"/>
    </location>
</feature>
<feature type="helix" evidence="8">
    <location>
        <begin position="232"/>
        <end position="241"/>
    </location>
</feature>
<feature type="strand" evidence="8">
    <location>
        <begin position="245"/>
        <end position="249"/>
    </location>
</feature>
<feature type="helix" evidence="8">
    <location>
        <begin position="254"/>
        <end position="257"/>
    </location>
</feature>
<feature type="strand" evidence="8">
    <location>
        <begin position="261"/>
        <end position="264"/>
    </location>
</feature>
<feature type="strand" evidence="8">
    <location>
        <begin position="276"/>
        <end position="288"/>
    </location>
</feature>
<feature type="strand" evidence="8">
    <location>
        <begin position="290"/>
        <end position="295"/>
    </location>
</feature>
<feature type="strand" evidence="8">
    <location>
        <begin position="307"/>
        <end position="311"/>
    </location>
</feature>
<feature type="strand" evidence="8">
    <location>
        <begin position="313"/>
        <end position="316"/>
    </location>
</feature>
<feature type="helix" evidence="8">
    <location>
        <begin position="317"/>
        <end position="319"/>
    </location>
</feature>
<feature type="strand" evidence="8">
    <location>
        <begin position="325"/>
        <end position="328"/>
    </location>
</feature>
<dbReference type="EC" id="3.4.22.38"/>
<dbReference type="EMBL" id="AF124092">
    <property type="protein sequence ID" value="AAD33249.1"/>
    <property type="molecule type" value="mRNA"/>
</dbReference>
<dbReference type="RefSeq" id="NP_001027984.1">
    <property type="nucleotide sequence ID" value="NM_001032812.2"/>
</dbReference>
<dbReference type="PDB" id="2FTD">
    <property type="method" value="X-ray"/>
    <property type="resolution" value="2.55 A"/>
    <property type="chains" value="A/B=115-329"/>
</dbReference>
<dbReference type="PDBsum" id="2FTD"/>
<dbReference type="SMR" id="P61277"/>
<dbReference type="FunCoup" id="P61277">
    <property type="interactions" value="347"/>
</dbReference>
<dbReference type="MEROPS" id="I29.007"/>
<dbReference type="GlyCosmos" id="P61277">
    <property type="glycosylation" value="1 site, No reported glycans"/>
</dbReference>
<dbReference type="PaxDb" id="9544-ENSMMUP00000000728"/>
<dbReference type="GeneID" id="574112"/>
<dbReference type="KEGG" id="mcc:574112"/>
<dbReference type="CTD" id="1513"/>
<dbReference type="eggNOG" id="KOG1543">
    <property type="taxonomic scope" value="Eukaryota"/>
</dbReference>
<dbReference type="HOGENOM" id="CLU_012184_1_2_1"/>
<dbReference type="InParanoid" id="P61277"/>
<dbReference type="OrthoDB" id="65740at2759"/>
<dbReference type="TreeFam" id="TF313739"/>
<dbReference type="EvolutionaryTrace" id="P61277"/>
<dbReference type="Proteomes" id="UP000006718">
    <property type="component" value="Unassembled WGS sequence"/>
</dbReference>
<dbReference type="GO" id="GO:0016324">
    <property type="term" value="C:apical plasma membrane"/>
    <property type="evidence" value="ECO:0007669"/>
    <property type="project" value="UniProtKB-SubCell"/>
</dbReference>
<dbReference type="GO" id="GO:0005615">
    <property type="term" value="C:extracellular space"/>
    <property type="evidence" value="ECO:0000250"/>
    <property type="project" value="UniProtKB"/>
</dbReference>
<dbReference type="GO" id="GO:0005764">
    <property type="term" value="C:lysosome"/>
    <property type="evidence" value="ECO:0000250"/>
    <property type="project" value="UniProtKB"/>
</dbReference>
<dbReference type="GO" id="GO:0004197">
    <property type="term" value="F:cysteine-type endopeptidase activity"/>
    <property type="evidence" value="ECO:0000318"/>
    <property type="project" value="GO_Central"/>
</dbReference>
<dbReference type="GO" id="GO:0051603">
    <property type="term" value="P:proteolysis involved in protein catabolic process"/>
    <property type="evidence" value="ECO:0000318"/>
    <property type="project" value="GO_Central"/>
</dbReference>
<dbReference type="GO" id="GO:0006590">
    <property type="term" value="P:thyroid hormone generation"/>
    <property type="evidence" value="ECO:0000250"/>
    <property type="project" value="UniProtKB"/>
</dbReference>
<dbReference type="CDD" id="cd02248">
    <property type="entry name" value="Peptidase_C1A"/>
    <property type="match status" value="1"/>
</dbReference>
<dbReference type="FunFam" id="3.90.70.10:FF:000006">
    <property type="entry name" value="Cathepsin S"/>
    <property type="match status" value="1"/>
</dbReference>
<dbReference type="Gene3D" id="3.90.70.10">
    <property type="entry name" value="Cysteine proteinases"/>
    <property type="match status" value="1"/>
</dbReference>
<dbReference type="InterPro" id="IPR038765">
    <property type="entry name" value="Papain-like_cys_pep_sf"/>
</dbReference>
<dbReference type="InterPro" id="IPR025661">
    <property type="entry name" value="Pept_asp_AS"/>
</dbReference>
<dbReference type="InterPro" id="IPR000169">
    <property type="entry name" value="Pept_cys_AS"/>
</dbReference>
<dbReference type="InterPro" id="IPR025660">
    <property type="entry name" value="Pept_his_AS"/>
</dbReference>
<dbReference type="InterPro" id="IPR013128">
    <property type="entry name" value="Peptidase_C1A"/>
</dbReference>
<dbReference type="InterPro" id="IPR000668">
    <property type="entry name" value="Peptidase_C1A_C"/>
</dbReference>
<dbReference type="InterPro" id="IPR039417">
    <property type="entry name" value="Peptidase_C1A_papain-like"/>
</dbReference>
<dbReference type="InterPro" id="IPR013201">
    <property type="entry name" value="Prot_inhib_I29"/>
</dbReference>
<dbReference type="PANTHER" id="PTHR12411">
    <property type="entry name" value="CYSTEINE PROTEASE FAMILY C1-RELATED"/>
    <property type="match status" value="1"/>
</dbReference>
<dbReference type="Pfam" id="PF08246">
    <property type="entry name" value="Inhibitor_I29"/>
    <property type="match status" value="1"/>
</dbReference>
<dbReference type="Pfam" id="PF00112">
    <property type="entry name" value="Peptidase_C1"/>
    <property type="match status" value="1"/>
</dbReference>
<dbReference type="PRINTS" id="PR00705">
    <property type="entry name" value="PAPAIN"/>
</dbReference>
<dbReference type="SMART" id="SM00848">
    <property type="entry name" value="Inhibitor_I29"/>
    <property type="match status" value="1"/>
</dbReference>
<dbReference type="SMART" id="SM00645">
    <property type="entry name" value="Pept_C1"/>
    <property type="match status" value="1"/>
</dbReference>
<dbReference type="SUPFAM" id="SSF54001">
    <property type="entry name" value="Cysteine proteinases"/>
    <property type="match status" value="1"/>
</dbReference>
<dbReference type="PROSITE" id="PS00640">
    <property type="entry name" value="THIOL_PROTEASE_ASN"/>
    <property type="match status" value="1"/>
</dbReference>
<dbReference type="PROSITE" id="PS00139">
    <property type="entry name" value="THIOL_PROTEASE_CYS"/>
    <property type="match status" value="1"/>
</dbReference>
<dbReference type="PROSITE" id="PS00639">
    <property type="entry name" value="THIOL_PROTEASE_HIS"/>
    <property type="match status" value="1"/>
</dbReference>
<keyword id="KW-0002">3D-structure</keyword>
<keyword id="KW-1003">Cell membrane</keyword>
<keyword id="KW-1015">Disulfide bond</keyword>
<keyword id="KW-0325">Glycoprotein</keyword>
<keyword id="KW-0378">Hydrolase</keyword>
<keyword id="KW-0458">Lysosome</keyword>
<keyword id="KW-0472">Membrane</keyword>
<keyword id="KW-0645">Protease</keyword>
<keyword id="KW-1185">Reference proteome</keyword>
<keyword id="KW-0964">Secreted</keyword>
<keyword id="KW-0732">Signal</keyword>
<keyword id="KW-0788">Thiol protease</keyword>
<keyword id="KW-0865">Zymogen</keyword>
<name>CATK_MACMU</name>
<proteinExistence type="evidence at protein level"/>
<evidence type="ECO:0000250" key="1"/>
<evidence type="ECO:0000250" key="2">
    <source>
        <dbReference type="UniProtKB" id="P43235"/>
    </source>
</evidence>
<evidence type="ECO:0000255" key="3"/>
<evidence type="ECO:0000255" key="4">
    <source>
        <dbReference type="PROSITE-ProRule" id="PRU10088"/>
    </source>
</evidence>
<evidence type="ECO:0000255" key="5">
    <source>
        <dbReference type="PROSITE-ProRule" id="PRU10089"/>
    </source>
</evidence>
<evidence type="ECO:0000255" key="6">
    <source>
        <dbReference type="PROSITE-ProRule" id="PRU10090"/>
    </source>
</evidence>
<evidence type="ECO:0000269" key="7">
    <source>
    </source>
</evidence>
<evidence type="ECO:0007829" key="8">
    <source>
        <dbReference type="PDB" id="2FTD"/>
    </source>
</evidence>
<organism>
    <name type="scientific">Macaca mulatta</name>
    <name type="common">Rhesus macaque</name>
    <dbReference type="NCBI Taxonomy" id="9544"/>
    <lineage>
        <taxon>Eukaryota</taxon>
        <taxon>Metazoa</taxon>
        <taxon>Chordata</taxon>
        <taxon>Craniata</taxon>
        <taxon>Vertebrata</taxon>
        <taxon>Euteleostomi</taxon>
        <taxon>Mammalia</taxon>
        <taxon>Eutheria</taxon>
        <taxon>Euarchontoglires</taxon>
        <taxon>Primates</taxon>
        <taxon>Haplorrhini</taxon>
        <taxon>Catarrhini</taxon>
        <taxon>Cercopithecidae</taxon>
        <taxon>Cercopithecinae</taxon>
        <taxon>Macaca</taxon>
    </lineage>
</organism>